<evidence type="ECO:0000255" key="1">
    <source>
        <dbReference type="HAMAP-Rule" id="MF_00818"/>
    </source>
</evidence>
<organism>
    <name type="scientific">Leptospira interrogans serogroup Icterohaemorrhagiae serovar copenhageni (strain Fiocruz L1-130)</name>
    <dbReference type="NCBI Taxonomy" id="267671"/>
    <lineage>
        <taxon>Bacteria</taxon>
        <taxon>Pseudomonadati</taxon>
        <taxon>Spirochaetota</taxon>
        <taxon>Spirochaetia</taxon>
        <taxon>Leptospirales</taxon>
        <taxon>Leptospiraceae</taxon>
        <taxon>Leptospira</taxon>
    </lineage>
</organism>
<sequence length="133" mass="15353">MKTNHPETYDGRQDHIPSLQTPEIESFTNVYEGKDYTIDFTVPEFTAVCPKTGLPDFGVILVSYIPNKRCIELKSFKEYILSYRNVGIFHEFLVNKILEDVIKSIDPKYLKVIGDYNARGGIKTIVTREYKKP</sequence>
<feature type="chain" id="PRO_0000162978" description="NADPH-dependent 7-cyano-7-deazaguanine reductase">
    <location>
        <begin position="1"/>
        <end position="133"/>
    </location>
</feature>
<feature type="active site" description="Thioimide intermediate" evidence="1">
    <location>
        <position position="49"/>
    </location>
</feature>
<feature type="active site" description="Proton donor" evidence="1">
    <location>
        <position position="56"/>
    </location>
</feature>
<feature type="binding site" evidence="1">
    <location>
        <begin position="71"/>
        <end position="73"/>
    </location>
    <ligand>
        <name>substrate</name>
    </ligand>
</feature>
<feature type="binding site" evidence="1">
    <location>
        <begin position="90"/>
        <end position="91"/>
    </location>
    <ligand>
        <name>substrate</name>
    </ligand>
</feature>
<accession>Q72RB6</accession>
<reference key="1">
    <citation type="journal article" date="2004" name="J. Bacteriol.">
        <title>Comparative genomics of two Leptospira interrogans serovars reveals novel insights into physiology and pathogenesis.</title>
        <authorList>
            <person name="Nascimento A.L.T.O."/>
            <person name="Ko A.I."/>
            <person name="Martins E.A.L."/>
            <person name="Monteiro-Vitorello C.B."/>
            <person name="Ho P.L."/>
            <person name="Haake D.A."/>
            <person name="Verjovski-Almeida S."/>
            <person name="Hartskeerl R.A."/>
            <person name="Marques M.V."/>
            <person name="Oliveira M.C."/>
            <person name="Menck C.F.M."/>
            <person name="Leite L.C.C."/>
            <person name="Carrer H."/>
            <person name="Coutinho L.L."/>
            <person name="Degrave W.M."/>
            <person name="Dellagostin O.A."/>
            <person name="El-Dorry H."/>
            <person name="Ferro E.S."/>
            <person name="Ferro M.I.T."/>
            <person name="Furlan L.R."/>
            <person name="Gamberini M."/>
            <person name="Giglioti E.A."/>
            <person name="Goes-Neto A."/>
            <person name="Goldman G.H."/>
            <person name="Goldman M.H.S."/>
            <person name="Harakava R."/>
            <person name="Jeronimo S.M.B."/>
            <person name="Junqueira-de-Azevedo I.L.M."/>
            <person name="Kimura E.T."/>
            <person name="Kuramae E.E."/>
            <person name="Lemos E.G.M."/>
            <person name="Lemos M.V.F."/>
            <person name="Marino C.L."/>
            <person name="Nunes L.R."/>
            <person name="de Oliveira R.C."/>
            <person name="Pereira G.G."/>
            <person name="Reis M.S."/>
            <person name="Schriefer A."/>
            <person name="Siqueira W.J."/>
            <person name="Sommer P."/>
            <person name="Tsai S.M."/>
            <person name="Simpson A.J.G."/>
            <person name="Ferro J.A."/>
            <person name="Camargo L.E.A."/>
            <person name="Kitajima J.P."/>
            <person name="Setubal J.C."/>
            <person name="Van Sluys M.A."/>
        </authorList>
    </citation>
    <scope>NUCLEOTIDE SEQUENCE [LARGE SCALE GENOMIC DNA]</scope>
    <source>
        <strain>Fiocruz L1-130</strain>
    </source>
</reference>
<proteinExistence type="inferred from homology"/>
<dbReference type="EC" id="1.7.1.13" evidence="1"/>
<dbReference type="EMBL" id="AE016823">
    <property type="protein sequence ID" value="AAS70418.1"/>
    <property type="molecule type" value="Genomic_DNA"/>
</dbReference>
<dbReference type="RefSeq" id="WP_000856053.1">
    <property type="nucleotide sequence ID" value="NC_005823.1"/>
</dbReference>
<dbReference type="SMR" id="Q72RB6"/>
<dbReference type="GeneID" id="61141729"/>
<dbReference type="KEGG" id="lic:LIC_11832"/>
<dbReference type="HOGENOM" id="CLU_102489_1_0_12"/>
<dbReference type="UniPathway" id="UPA00392"/>
<dbReference type="Proteomes" id="UP000007037">
    <property type="component" value="Chromosome I"/>
</dbReference>
<dbReference type="GO" id="GO:0005737">
    <property type="term" value="C:cytoplasm"/>
    <property type="evidence" value="ECO:0007669"/>
    <property type="project" value="UniProtKB-SubCell"/>
</dbReference>
<dbReference type="GO" id="GO:0033739">
    <property type="term" value="F:preQ1 synthase activity"/>
    <property type="evidence" value="ECO:0007669"/>
    <property type="project" value="UniProtKB-UniRule"/>
</dbReference>
<dbReference type="GO" id="GO:0008616">
    <property type="term" value="P:queuosine biosynthetic process"/>
    <property type="evidence" value="ECO:0007669"/>
    <property type="project" value="UniProtKB-UniRule"/>
</dbReference>
<dbReference type="GO" id="GO:0006400">
    <property type="term" value="P:tRNA modification"/>
    <property type="evidence" value="ECO:0007669"/>
    <property type="project" value="UniProtKB-UniRule"/>
</dbReference>
<dbReference type="Gene3D" id="3.30.1130.10">
    <property type="match status" value="1"/>
</dbReference>
<dbReference type="HAMAP" id="MF_00818">
    <property type="entry name" value="QueF_type1"/>
    <property type="match status" value="1"/>
</dbReference>
<dbReference type="InterPro" id="IPR043133">
    <property type="entry name" value="GTP-CH-I_C/QueF"/>
</dbReference>
<dbReference type="InterPro" id="IPR050084">
    <property type="entry name" value="NADPH_dep_7-cyano-7-deazaG_red"/>
</dbReference>
<dbReference type="InterPro" id="IPR029500">
    <property type="entry name" value="QueF"/>
</dbReference>
<dbReference type="InterPro" id="IPR016856">
    <property type="entry name" value="QueF_type1"/>
</dbReference>
<dbReference type="NCBIfam" id="TIGR03139">
    <property type="entry name" value="QueF-II"/>
    <property type="match status" value="1"/>
</dbReference>
<dbReference type="PANTHER" id="PTHR34354">
    <property type="entry name" value="NADPH-DEPENDENT 7-CYANO-7-DEAZAGUANINE REDUCTASE"/>
    <property type="match status" value="1"/>
</dbReference>
<dbReference type="PANTHER" id="PTHR34354:SF1">
    <property type="entry name" value="NADPH-DEPENDENT 7-CYANO-7-DEAZAGUANINE REDUCTASE"/>
    <property type="match status" value="1"/>
</dbReference>
<dbReference type="Pfam" id="PF14489">
    <property type="entry name" value="QueF"/>
    <property type="match status" value="1"/>
</dbReference>
<dbReference type="PIRSF" id="PIRSF027377">
    <property type="entry name" value="Nitrile_oxidored_QueF"/>
    <property type="match status" value="1"/>
</dbReference>
<dbReference type="SUPFAM" id="SSF55620">
    <property type="entry name" value="Tetrahydrobiopterin biosynthesis enzymes-like"/>
    <property type="match status" value="1"/>
</dbReference>
<name>QUEF_LEPIC</name>
<gene>
    <name evidence="1" type="primary">queF</name>
    <name type="ordered locus">LIC_11832</name>
</gene>
<protein>
    <recommendedName>
        <fullName evidence="1">NADPH-dependent 7-cyano-7-deazaguanine reductase</fullName>
        <ecNumber evidence="1">1.7.1.13</ecNumber>
    </recommendedName>
    <alternativeName>
        <fullName evidence="1">7-cyano-7-carbaguanine reductase</fullName>
    </alternativeName>
    <alternativeName>
        <fullName evidence="1">NADPH-dependent nitrile oxidoreductase</fullName>
    </alternativeName>
    <alternativeName>
        <fullName evidence="1">PreQ(0) reductase</fullName>
    </alternativeName>
</protein>
<keyword id="KW-0963">Cytoplasm</keyword>
<keyword id="KW-0521">NADP</keyword>
<keyword id="KW-0560">Oxidoreductase</keyword>
<keyword id="KW-0671">Queuosine biosynthesis</keyword>
<comment type="function">
    <text evidence="1">Catalyzes the NADPH-dependent reduction of 7-cyano-7-deazaguanine (preQ0) to 7-aminomethyl-7-deazaguanine (preQ1).</text>
</comment>
<comment type="catalytic activity">
    <reaction evidence="1">
        <text>7-aminomethyl-7-carbaguanine + 2 NADP(+) = 7-cyano-7-deazaguanine + 2 NADPH + 3 H(+)</text>
        <dbReference type="Rhea" id="RHEA:13409"/>
        <dbReference type="ChEBI" id="CHEBI:15378"/>
        <dbReference type="ChEBI" id="CHEBI:45075"/>
        <dbReference type="ChEBI" id="CHEBI:57783"/>
        <dbReference type="ChEBI" id="CHEBI:58349"/>
        <dbReference type="ChEBI" id="CHEBI:58703"/>
        <dbReference type="EC" id="1.7.1.13"/>
    </reaction>
</comment>
<comment type="pathway">
    <text evidence="1">tRNA modification; tRNA-queuosine biosynthesis.</text>
</comment>
<comment type="subcellular location">
    <subcellularLocation>
        <location evidence="1">Cytoplasm</location>
    </subcellularLocation>
</comment>
<comment type="similarity">
    <text evidence="1">Belongs to the GTP cyclohydrolase I family. QueF type 1 subfamily.</text>
</comment>